<gene>
    <name evidence="1" type="primary">uvrB</name>
    <name type="ordered locus">SP_1238</name>
</gene>
<evidence type="ECO:0000255" key="1">
    <source>
        <dbReference type="HAMAP-Rule" id="MF_00204"/>
    </source>
</evidence>
<feature type="chain" id="PRO_0000138432" description="UvrABC system protein B">
    <location>
        <begin position="1"/>
        <end position="662"/>
    </location>
</feature>
<feature type="domain" description="Helicase ATP-binding" evidence="1">
    <location>
        <begin position="31"/>
        <end position="418"/>
    </location>
</feature>
<feature type="domain" description="Helicase C-terminal" evidence="1">
    <location>
        <begin position="435"/>
        <end position="601"/>
    </location>
</feature>
<feature type="domain" description="UVR" evidence="1">
    <location>
        <begin position="626"/>
        <end position="661"/>
    </location>
</feature>
<feature type="short sequence motif" description="Beta-hairpin">
    <location>
        <begin position="97"/>
        <end position="120"/>
    </location>
</feature>
<feature type="binding site" evidence="1">
    <location>
        <begin position="44"/>
        <end position="51"/>
    </location>
    <ligand>
        <name>ATP</name>
        <dbReference type="ChEBI" id="CHEBI:30616"/>
    </ligand>
</feature>
<comment type="function">
    <text evidence="1">The UvrABC repair system catalyzes the recognition and processing of DNA lesions. A damage recognition complex composed of 2 UvrA and 2 UvrB subunits scans DNA for abnormalities. Upon binding of the UvrA(2)B(2) complex to a putative damaged site, the DNA wraps around one UvrB monomer. DNA wrap is dependent on ATP binding by UvrB and probably causes local melting of the DNA helix, facilitating insertion of UvrB beta-hairpin between the DNA strands. Then UvrB probes one DNA strand for the presence of a lesion. If a lesion is found the UvrA subunits dissociate and the UvrB-DNA preincision complex is formed. This complex is subsequently bound by UvrC and the second UvrB is released. If no lesion is found, the DNA wraps around the other UvrB subunit that will check the other stand for damage.</text>
</comment>
<comment type="subunit">
    <text evidence="1">Forms a heterotetramer with UvrA during the search for lesions. Interacts with UvrC in an incision complex.</text>
</comment>
<comment type="subcellular location">
    <subcellularLocation>
        <location evidence="1">Cytoplasm</location>
    </subcellularLocation>
</comment>
<comment type="domain">
    <text evidence="1">The beta-hairpin motif is involved in DNA binding.</text>
</comment>
<comment type="similarity">
    <text evidence="1">Belongs to the UvrB family.</text>
</comment>
<organism>
    <name type="scientific">Streptococcus pneumoniae serotype 4 (strain ATCC BAA-334 / TIGR4)</name>
    <dbReference type="NCBI Taxonomy" id="170187"/>
    <lineage>
        <taxon>Bacteria</taxon>
        <taxon>Bacillati</taxon>
        <taxon>Bacillota</taxon>
        <taxon>Bacilli</taxon>
        <taxon>Lactobacillales</taxon>
        <taxon>Streptococcaceae</taxon>
        <taxon>Streptococcus</taxon>
    </lineage>
</organism>
<protein>
    <recommendedName>
        <fullName evidence="1">UvrABC system protein B</fullName>
        <shortName evidence="1">Protein UvrB</shortName>
    </recommendedName>
    <alternativeName>
        <fullName evidence="1">Excinuclease ABC subunit B</fullName>
    </alternativeName>
</protein>
<name>UVRB_STRPN</name>
<proteinExistence type="inferred from homology"/>
<reference key="1">
    <citation type="journal article" date="2001" name="Science">
        <title>Complete genome sequence of a virulent isolate of Streptococcus pneumoniae.</title>
        <authorList>
            <person name="Tettelin H."/>
            <person name="Nelson K.E."/>
            <person name="Paulsen I.T."/>
            <person name="Eisen J.A."/>
            <person name="Read T.D."/>
            <person name="Peterson S.N."/>
            <person name="Heidelberg J.F."/>
            <person name="DeBoy R.T."/>
            <person name="Haft D.H."/>
            <person name="Dodson R.J."/>
            <person name="Durkin A.S."/>
            <person name="Gwinn M.L."/>
            <person name="Kolonay J.F."/>
            <person name="Nelson W.C."/>
            <person name="Peterson J.D."/>
            <person name="Umayam L.A."/>
            <person name="White O."/>
            <person name="Salzberg S.L."/>
            <person name="Lewis M.R."/>
            <person name="Radune D."/>
            <person name="Holtzapple E.K."/>
            <person name="Khouri H.M."/>
            <person name="Wolf A.M."/>
            <person name="Utterback T.R."/>
            <person name="Hansen C.L."/>
            <person name="McDonald L.A."/>
            <person name="Feldblyum T.V."/>
            <person name="Angiuoli S.V."/>
            <person name="Dickinson T."/>
            <person name="Hickey E.K."/>
            <person name="Holt I.E."/>
            <person name="Loftus B.J."/>
            <person name="Yang F."/>
            <person name="Smith H.O."/>
            <person name="Venter J.C."/>
            <person name="Dougherty B.A."/>
            <person name="Morrison D.A."/>
            <person name="Hollingshead S.K."/>
            <person name="Fraser C.M."/>
        </authorList>
    </citation>
    <scope>NUCLEOTIDE SEQUENCE [LARGE SCALE GENOMIC DNA]</scope>
    <source>
        <strain>ATCC BAA-334 / TIGR4</strain>
    </source>
</reference>
<sequence>MINHITDNQFKLVSKYQPSGDQPQAIEQLVDNIEGGEKAQILMGATGTGKTYTMSQVISKVNKPTLVIAHNKTLAGQLYGEFKEFFPENAVEYFVSYYDYYQPEAYVPSSDTYIEKDSSVNDEIDKLRHSATSALLERNDVIVVASVSCIYGLGSPKEYADSVVSLRPGLEISRDKLLNDLVDIQFERNDIDFQRGRFRVRGDVVEIFPASRDEHAFRVEFFGDEIDRIREVEALTGQVLGEVDHLAIFPATHFVTNDDHMEVAIAKIQAELEEQLAVFEKEGKLLEAQRLKQRTEYDIEMLREMGYTNGVENYSRHMDGRSEGEPPYTLLDFFPDDFLIMIDESHMTIGQIKGMYNGDRSRKEMLVNYGFRLPSALDNRPLRREEFESHVHQIVYVSATPGDYENEQTETVIEQIIRPTGLLDPEVEVRPTMGQIDDLLGEINARVEKNERTFITTLTKKMAEDLTDYFKEMGIKVKYMHSDIKTLERTEIIRDLRLGVFDVLVGINLLREGIDVPEVSLVAILDADKEGFLRNERGLIQTIGRAARNSEGHVIMYADTVTQSMQRAIDETARRRKIQMAYNEEHGIVPQTIKKEIRDLIAVTKAVAKEEDKEVDINSLNKQERKELVKKLEKQMQEAVEVLDFELAAQIRDMMLEVKALD</sequence>
<accession>Q54986</accession>
<keyword id="KW-0067">ATP-binding</keyword>
<keyword id="KW-0963">Cytoplasm</keyword>
<keyword id="KW-0227">DNA damage</keyword>
<keyword id="KW-0228">DNA excision</keyword>
<keyword id="KW-0234">DNA repair</keyword>
<keyword id="KW-0267">Excision nuclease</keyword>
<keyword id="KW-0547">Nucleotide-binding</keyword>
<keyword id="KW-1185">Reference proteome</keyword>
<keyword id="KW-0742">SOS response</keyword>
<dbReference type="EMBL" id="AE005672">
    <property type="protein sequence ID" value="AAK75344.1"/>
    <property type="molecule type" value="Genomic_DNA"/>
</dbReference>
<dbReference type="PIR" id="G95143">
    <property type="entry name" value="G95143"/>
</dbReference>
<dbReference type="RefSeq" id="WP_000607027.1">
    <property type="nucleotide sequence ID" value="NZ_CP155539.1"/>
</dbReference>
<dbReference type="SMR" id="Q54986"/>
<dbReference type="PaxDb" id="170187-SP_1238"/>
<dbReference type="EnsemblBacteria" id="AAK75344">
    <property type="protein sequence ID" value="AAK75344"/>
    <property type="gene ID" value="SP_1238"/>
</dbReference>
<dbReference type="KEGG" id="spn:SP_1238"/>
<dbReference type="eggNOG" id="COG0556">
    <property type="taxonomic scope" value="Bacteria"/>
</dbReference>
<dbReference type="PhylomeDB" id="Q54986"/>
<dbReference type="BioCyc" id="SPNE170187:G1FZB-1253-MONOMER"/>
<dbReference type="Proteomes" id="UP000000585">
    <property type="component" value="Chromosome"/>
</dbReference>
<dbReference type="GO" id="GO:0005737">
    <property type="term" value="C:cytoplasm"/>
    <property type="evidence" value="ECO:0007669"/>
    <property type="project" value="UniProtKB-SubCell"/>
</dbReference>
<dbReference type="GO" id="GO:0009380">
    <property type="term" value="C:excinuclease repair complex"/>
    <property type="evidence" value="ECO:0007669"/>
    <property type="project" value="InterPro"/>
</dbReference>
<dbReference type="GO" id="GO:0005524">
    <property type="term" value="F:ATP binding"/>
    <property type="evidence" value="ECO:0007669"/>
    <property type="project" value="UniProtKB-UniRule"/>
</dbReference>
<dbReference type="GO" id="GO:0016887">
    <property type="term" value="F:ATP hydrolysis activity"/>
    <property type="evidence" value="ECO:0007669"/>
    <property type="project" value="InterPro"/>
</dbReference>
<dbReference type="GO" id="GO:0003677">
    <property type="term" value="F:DNA binding"/>
    <property type="evidence" value="ECO:0007669"/>
    <property type="project" value="UniProtKB-UniRule"/>
</dbReference>
<dbReference type="GO" id="GO:0009381">
    <property type="term" value="F:excinuclease ABC activity"/>
    <property type="evidence" value="ECO:0007669"/>
    <property type="project" value="UniProtKB-UniRule"/>
</dbReference>
<dbReference type="GO" id="GO:0006289">
    <property type="term" value="P:nucleotide-excision repair"/>
    <property type="evidence" value="ECO:0007669"/>
    <property type="project" value="UniProtKB-UniRule"/>
</dbReference>
<dbReference type="GO" id="GO:0009432">
    <property type="term" value="P:SOS response"/>
    <property type="evidence" value="ECO:0007669"/>
    <property type="project" value="UniProtKB-UniRule"/>
</dbReference>
<dbReference type="CDD" id="cd17916">
    <property type="entry name" value="DEXHc_UvrB"/>
    <property type="match status" value="1"/>
</dbReference>
<dbReference type="CDD" id="cd18790">
    <property type="entry name" value="SF2_C_UvrB"/>
    <property type="match status" value="1"/>
</dbReference>
<dbReference type="Gene3D" id="3.40.50.300">
    <property type="entry name" value="P-loop containing nucleotide triphosphate hydrolases"/>
    <property type="match status" value="3"/>
</dbReference>
<dbReference type="Gene3D" id="4.10.860.10">
    <property type="entry name" value="UVR domain"/>
    <property type="match status" value="1"/>
</dbReference>
<dbReference type="HAMAP" id="MF_00204">
    <property type="entry name" value="UvrB"/>
    <property type="match status" value="1"/>
</dbReference>
<dbReference type="InterPro" id="IPR006935">
    <property type="entry name" value="Helicase/UvrB_N"/>
</dbReference>
<dbReference type="InterPro" id="IPR014001">
    <property type="entry name" value="Helicase_ATP-bd"/>
</dbReference>
<dbReference type="InterPro" id="IPR001650">
    <property type="entry name" value="Helicase_C-like"/>
</dbReference>
<dbReference type="InterPro" id="IPR027417">
    <property type="entry name" value="P-loop_NTPase"/>
</dbReference>
<dbReference type="InterPro" id="IPR001943">
    <property type="entry name" value="UVR_dom"/>
</dbReference>
<dbReference type="InterPro" id="IPR036876">
    <property type="entry name" value="UVR_dom_sf"/>
</dbReference>
<dbReference type="InterPro" id="IPR004807">
    <property type="entry name" value="UvrB"/>
</dbReference>
<dbReference type="InterPro" id="IPR041471">
    <property type="entry name" value="UvrB_inter"/>
</dbReference>
<dbReference type="InterPro" id="IPR024759">
    <property type="entry name" value="UvrB_YAD/RRR_dom"/>
</dbReference>
<dbReference type="NCBIfam" id="NF003673">
    <property type="entry name" value="PRK05298.1"/>
    <property type="match status" value="1"/>
</dbReference>
<dbReference type="NCBIfam" id="TIGR00631">
    <property type="entry name" value="uvrb"/>
    <property type="match status" value="1"/>
</dbReference>
<dbReference type="PANTHER" id="PTHR24029">
    <property type="entry name" value="UVRABC SYSTEM PROTEIN B"/>
    <property type="match status" value="1"/>
</dbReference>
<dbReference type="PANTHER" id="PTHR24029:SF0">
    <property type="entry name" value="UVRABC SYSTEM PROTEIN B"/>
    <property type="match status" value="1"/>
</dbReference>
<dbReference type="Pfam" id="PF00271">
    <property type="entry name" value="Helicase_C"/>
    <property type="match status" value="1"/>
</dbReference>
<dbReference type="Pfam" id="PF04851">
    <property type="entry name" value="ResIII"/>
    <property type="match status" value="1"/>
</dbReference>
<dbReference type="Pfam" id="PF02151">
    <property type="entry name" value="UVR"/>
    <property type="match status" value="1"/>
</dbReference>
<dbReference type="Pfam" id="PF12344">
    <property type="entry name" value="UvrB"/>
    <property type="match status" value="1"/>
</dbReference>
<dbReference type="Pfam" id="PF17757">
    <property type="entry name" value="UvrB_inter"/>
    <property type="match status" value="1"/>
</dbReference>
<dbReference type="SMART" id="SM00487">
    <property type="entry name" value="DEXDc"/>
    <property type="match status" value="1"/>
</dbReference>
<dbReference type="SMART" id="SM00490">
    <property type="entry name" value="HELICc"/>
    <property type="match status" value="1"/>
</dbReference>
<dbReference type="SUPFAM" id="SSF46600">
    <property type="entry name" value="C-terminal UvrC-binding domain of UvrB"/>
    <property type="match status" value="1"/>
</dbReference>
<dbReference type="SUPFAM" id="SSF52540">
    <property type="entry name" value="P-loop containing nucleoside triphosphate hydrolases"/>
    <property type="match status" value="2"/>
</dbReference>
<dbReference type="PROSITE" id="PS51192">
    <property type="entry name" value="HELICASE_ATP_BIND_1"/>
    <property type="match status" value="1"/>
</dbReference>
<dbReference type="PROSITE" id="PS51194">
    <property type="entry name" value="HELICASE_CTER"/>
    <property type="match status" value="1"/>
</dbReference>
<dbReference type="PROSITE" id="PS50151">
    <property type="entry name" value="UVR"/>
    <property type="match status" value="1"/>
</dbReference>